<evidence type="ECO:0000255" key="1">
    <source>
        <dbReference type="HAMAP-Rule" id="MF_00651"/>
    </source>
</evidence>
<feature type="chain" id="PRO_0000172072" description="Putative pre-16S rRNA nuclease">
    <location>
        <begin position="1"/>
        <end position="138"/>
    </location>
</feature>
<name>YQGF_HELHP</name>
<proteinExistence type="inferred from homology"/>
<reference key="1">
    <citation type="journal article" date="2003" name="Proc. Natl. Acad. Sci. U.S.A.">
        <title>The complete genome sequence of the carcinogenic bacterium Helicobacter hepaticus.</title>
        <authorList>
            <person name="Suerbaum S."/>
            <person name="Josenhans C."/>
            <person name="Sterzenbach T."/>
            <person name="Drescher B."/>
            <person name="Brandt P."/>
            <person name="Bell M."/>
            <person name="Droege M."/>
            <person name="Fartmann B."/>
            <person name="Fischer H.-P."/>
            <person name="Ge Z."/>
            <person name="Hoerster A."/>
            <person name="Holland R."/>
            <person name="Klein K."/>
            <person name="Koenig J."/>
            <person name="Macko L."/>
            <person name="Mendz G.L."/>
            <person name="Nyakatura G."/>
            <person name="Schauer D.B."/>
            <person name="Shen Z."/>
            <person name="Weber J."/>
            <person name="Frosch M."/>
            <person name="Fox J.G."/>
        </authorList>
    </citation>
    <scope>NUCLEOTIDE SEQUENCE [LARGE SCALE GENOMIC DNA]</scope>
    <source>
        <strain>ATCC 51449 / 3B1</strain>
    </source>
</reference>
<protein>
    <recommendedName>
        <fullName evidence="1">Putative pre-16S rRNA nuclease</fullName>
        <ecNumber evidence="1">3.1.-.-</ecNumber>
    </recommendedName>
</protein>
<sequence length="138" mass="15623">MNHCILACDVGLKRIGLATLKQEIILPLPPIIRINRNQAAKELDNVLKERNIHILVVGMPSGGEAEHSDTQKRISHFISLLSFEGEICFVNEDYTSFNALQSLSYMKRQNRARAQKDGRIDSLSACEILQRYIQSQKS</sequence>
<gene>
    <name type="ordered locus">HH_1229</name>
</gene>
<organism>
    <name type="scientific">Helicobacter hepaticus (strain ATCC 51449 / 3B1)</name>
    <dbReference type="NCBI Taxonomy" id="235279"/>
    <lineage>
        <taxon>Bacteria</taxon>
        <taxon>Pseudomonadati</taxon>
        <taxon>Campylobacterota</taxon>
        <taxon>Epsilonproteobacteria</taxon>
        <taxon>Campylobacterales</taxon>
        <taxon>Helicobacteraceae</taxon>
        <taxon>Helicobacter</taxon>
    </lineage>
</organism>
<keyword id="KW-0963">Cytoplasm</keyword>
<keyword id="KW-0378">Hydrolase</keyword>
<keyword id="KW-0540">Nuclease</keyword>
<keyword id="KW-1185">Reference proteome</keyword>
<keyword id="KW-0690">Ribosome biogenesis</keyword>
<comment type="function">
    <text evidence="1">Could be a nuclease involved in processing of the 5'-end of pre-16S rRNA.</text>
</comment>
<comment type="subcellular location">
    <subcellularLocation>
        <location evidence="1">Cytoplasm</location>
    </subcellularLocation>
</comment>
<comment type="similarity">
    <text evidence="1">Belongs to the YqgF nuclease family.</text>
</comment>
<accession>Q7VGU1</accession>
<dbReference type="EC" id="3.1.-.-" evidence="1"/>
<dbReference type="EMBL" id="AE017125">
    <property type="protein sequence ID" value="AAP77826.1"/>
    <property type="molecule type" value="Genomic_DNA"/>
</dbReference>
<dbReference type="RefSeq" id="WP_011116069.1">
    <property type="nucleotide sequence ID" value="NC_004917.1"/>
</dbReference>
<dbReference type="SMR" id="Q7VGU1"/>
<dbReference type="STRING" id="235279.HH_1229"/>
<dbReference type="KEGG" id="hhe:HH_1229"/>
<dbReference type="eggNOG" id="COG0816">
    <property type="taxonomic scope" value="Bacteria"/>
</dbReference>
<dbReference type="HOGENOM" id="CLU_098240_2_2_7"/>
<dbReference type="Proteomes" id="UP000002495">
    <property type="component" value="Chromosome"/>
</dbReference>
<dbReference type="GO" id="GO:0005829">
    <property type="term" value="C:cytosol"/>
    <property type="evidence" value="ECO:0007669"/>
    <property type="project" value="TreeGrafter"/>
</dbReference>
<dbReference type="GO" id="GO:0004518">
    <property type="term" value="F:nuclease activity"/>
    <property type="evidence" value="ECO:0007669"/>
    <property type="project" value="UniProtKB-KW"/>
</dbReference>
<dbReference type="GO" id="GO:0000967">
    <property type="term" value="P:rRNA 5'-end processing"/>
    <property type="evidence" value="ECO:0007669"/>
    <property type="project" value="UniProtKB-UniRule"/>
</dbReference>
<dbReference type="CDD" id="cd16964">
    <property type="entry name" value="YqgF"/>
    <property type="match status" value="1"/>
</dbReference>
<dbReference type="FunFam" id="3.30.420.140:FF:000013">
    <property type="entry name" value="Putative pre-16S rRNA nuclease"/>
    <property type="match status" value="1"/>
</dbReference>
<dbReference type="Gene3D" id="3.30.420.140">
    <property type="entry name" value="YqgF/RNase H-like domain"/>
    <property type="match status" value="1"/>
</dbReference>
<dbReference type="HAMAP" id="MF_00651">
    <property type="entry name" value="Nuclease_YqgF"/>
    <property type="match status" value="1"/>
</dbReference>
<dbReference type="InterPro" id="IPR012337">
    <property type="entry name" value="RNaseH-like_sf"/>
</dbReference>
<dbReference type="InterPro" id="IPR005227">
    <property type="entry name" value="YqgF"/>
</dbReference>
<dbReference type="InterPro" id="IPR006641">
    <property type="entry name" value="YqgF/RNaseH-like_dom"/>
</dbReference>
<dbReference type="InterPro" id="IPR037027">
    <property type="entry name" value="YqgF/RNaseH-like_dom_sf"/>
</dbReference>
<dbReference type="NCBIfam" id="NF001026">
    <property type="entry name" value="PRK00109.2-2"/>
    <property type="match status" value="1"/>
</dbReference>
<dbReference type="NCBIfam" id="TIGR00250">
    <property type="entry name" value="RNAse_H_YqgF"/>
    <property type="match status" value="1"/>
</dbReference>
<dbReference type="PANTHER" id="PTHR33317">
    <property type="entry name" value="POLYNUCLEOTIDYL TRANSFERASE, RIBONUCLEASE H-LIKE SUPERFAMILY PROTEIN"/>
    <property type="match status" value="1"/>
</dbReference>
<dbReference type="PANTHER" id="PTHR33317:SF4">
    <property type="entry name" value="POLYNUCLEOTIDYL TRANSFERASE, RIBONUCLEASE H-LIKE SUPERFAMILY PROTEIN"/>
    <property type="match status" value="1"/>
</dbReference>
<dbReference type="Pfam" id="PF03652">
    <property type="entry name" value="RuvX"/>
    <property type="match status" value="1"/>
</dbReference>
<dbReference type="SMART" id="SM00732">
    <property type="entry name" value="YqgFc"/>
    <property type="match status" value="1"/>
</dbReference>
<dbReference type="SUPFAM" id="SSF53098">
    <property type="entry name" value="Ribonuclease H-like"/>
    <property type="match status" value="1"/>
</dbReference>